<accession>Q2JSF1</accession>
<feature type="chain" id="PRO_0000325388" description="3-phosphoshikimate 1-carboxyvinyltransferase">
    <location>
        <begin position="1"/>
        <end position="444"/>
    </location>
</feature>
<feature type="active site" description="Proton acceptor" evidence="1">
    <location>
        <position position="326"/>
    </location>
</feature>
<feature type="binding site" evidence="1">
    <location>
        <position position="29"/>
    </location>
    <ligand>
        <name>3-phosphoshikimate</name>
        <dbReference type="ChEBI" id="CHEBI:145989"/>
    </ligand>
</feature>
<feature type="binding site" evidence="1">
    <location>
        <position position="29"/>
    </location>
    <ligand>
        <name>phosphoenolpyruvate</name>
        <dbReference type="ChEBI" id="CHEBI:58702"/>
    </ligand>
</feature>
<feature type="binding site" evidence="1">
    <location>
        <position position="30"/>
    </location>
    <ligand>
        <name>3-phosphoshikimate</name>
        <dbReference type="ChEBI" id="CHEBI:145989"/>
    </ligand>
</feature>
<feature type="binding site" evidence="1">
    <location>
        <position position="34"/>
    </location>
    <ligand>
        <name>3-phosphoshikimate</name>
        <dbReference type="ChEBI" id="CHEBI:145989"/>
    </ligand>
</feature>
<feature type="binding site" evidence="1">
    <location>
        <position position="102"/>
    </location>
    <ligand>
        <name>phosphoenolpyruvate</name>
        <dbReference type="ChEBI" id="CHEBI:58702"/>
    </ligand>
</feature>
<feature type="binding site" evidence="1">
    <location>
        <position position="131"/>
    </location>
    <ligand>
        <name>phosphoenolpyruvate</name>
        <dbReference type="ChEBI" id="CHEBI:58702"/>
    </ligand>
</feature>
<feature type="binding site" evidence="1">
    <location>
        <position position="176"/>
    </location>
    <ligand>
        <name>3-phosphoshikimate</name>
        <dbReference type="ChEBI" id="CHEBI:145989"/>
    </ligand>
</feature>
<feature type="binding site" evidence="1">
    <location>
        <position position="178"/>
    </location>
    <ligand>
        <name>3-phosphoshikimate</name>
        <dbReference type="ChEBI" id="CHEBI:145989"/>
    </ligand>
</feature>
<feature type="binding site" evidence="1">
    <location>
        <position position="178"/>
    </location>
    <ligand>
        <name>phosphoenolpyruvate</name>
        <dbReference type="ChEBI" id="CHEBI:58702"/>
    </ligand>
</feature>
<feature type="binding site" evidence="1">
    <location>
        <position position="326"/>
    </location>
    <ligand>
        <name>3-phosphoshikimate</name>
        <dbReference type="ChEBI" id="CHEBI:145989"/>
    </ligand>
</feature>
<feature type="binding site" evidence="1">
    <location>
        <position position="353"/>
    </location>
    <ligand>
        <name>3-phosphoshikimate</name>
        <dbReference type="ChEBI" id="CHEBI:145989"/>
    </ligand>
</feature>
<feature type="binding site" evidence="1">
    <location>
        <position position="357"/>
    </location>
    <ligand>
        <name>phosphoenolpyruvate</name>
        <dbReference type="ChEBI" id="CHEBI:58702"/>
    </ligand>
</feature>
<feature type="binding site" evidence="1">
    <location>
        <position position="399"/>
    </location>
    <ligand>
        <name>phosphoenolpyruvate</name>
        <dbReference type="ChEBI" id="CHEBI:58702"/>
    </ligand>
</feature>
<name>AROA_SYNJA</name>
<organism>
    <name type="scientific">Synechococcus sp. (strain JA-3-3Ab)</name>
    <name type="common">Cyanobacteria bacterium Yellowstone A-Prime</name>
    <dbReference type="NCBI Taxonomy" id="321327"/>
    <lineage>
        <taxon>Bacteria</taxon>
        <taxon>Bacillati</taxon>
        <taxon>Cyanobacteriota</taxon>
        <taxon>Cyanophyceae</taxon>
        <taxon>Synechococcales</taxon>
        <taxon>Synechococcaceae</taxon>
        <taxon>Synechococcus</taxon>
    </lineage>
</organism>
<evidence type="ECO:0000255" key="1">
    <source>
        <dbReference type="HAMAP-Rule" id="MF_00210"/>
    </source>
</evidence>
<keyword id="KW-0028">Amino-acid biosynthesis</keyword>
<keyword id="KW-0057">Aromatic amino acid biosynthesis</keyword>
<keyword id="KW-0963">Cytoplasm</keyword>
<keyword id="KW-0808">Transferase</keyword>
<comment type="function">
    <text evidence="1">Catalyzes the transfer of the enolpyruvyl moiety of phosphoenolpyruvate (PEP) to the 5-hydroxyl of shikimate-3-phosphate (S3P) to produce enolpyruvyl shikimate-3-phosphate and inorganic phosphate.</text>
</comment>
<comment type="catalytic activity">
    <reaction evidence="1">
        <text>3-phosphoshikimate + phosphoenolpyruvate = 5-O-(1-carboxyvinyl)-3-phosphoshikimate + phosphate</text>
        <dbReference type="Rhea" id="RHEA:21256"/>
        <dbReference type="ChEBI" id="CHEBI:43474"/>
        <dbReference type="ChEBI" id="CHEBI:57701"/>
        <dbReference type="ChEBI" id="CHEBI:58702"/>
        <dbReference type="ChEBI" id="CHEBI:145989"/>
        <dbReference type="EC" id="2.5.1.19"/>
    </reaction>
    <physiologicalReaction direction="left-to-right" evidence="1">
        <dbReference type="Rhea" id="RHEA:21257"/>
    </physiologicalReaction>
</comment>
<comment type="pathway">
    <text evidence="1">Metabolic intermediate biosynthesis; chorismate biosynthesis; chorismate from D-erythrose 4-phosphate and phosphoenolpyruvate: step 6/7.</text>
</comment>
<comment type="subunit">
    <text evidence="1">Monomer.</text>
</comment>
<comment type="subcellular location">
    <subcellularLocation>
        <location evidence="1">Cytoplasm</location>
    </subcellularLocation>
</comment>
<comment type="similarity">
    <text evidence="1">Belongs to the EPSP synthase family.</text>
</comment>
<protein>
    <recommendedName>
        <fullName evidence="1">3-phosphoshikimate 1-carboxyvinyltransferase</fullName>
        <ecNumber evidence="1">2.5.1.19</ecNumber>
    </recommendedName>
    <alternativeName>
        <fullName evidence="1">5-enolpyruvylshikimate-3-phosphate synthase</fullName>
        <shortName evidence="1">EPSP synthase</shortName>
        <shortName evidence="1">EPSPS</shortName>
    </alternativeName>
</protein>
<dbReference type="EC" id="2.5.1.19" evidence="1"/>
<dbReference type="EMBL" id="CP000239">
    <property type="protein sequence ID" value="ABD00430.1"/>
    <property type="molecule type" value="Genomic_DNA"/>
</dbReference>
<dbReference type="RefSeq" id="WP_011431103.1">
    <property type="nucleotide sequence ID" value="NC_007775.1"/>
</dbReference>
<dbReference type="SMR" id="Q2JSF1"/>
<dbReference type="STRING" id="321327.CYA_2296"/>
<dbReference type="KEGG" id="cya:CYA_2296"/>
<dbReference type="eggNOG" id="COG0128">
    <property type="taxonomic scope" value="Bacteria"/>
</dbReference>
<dbReference type="HOGENOM" id="CLU_024321_0_1_3"/>
<dbReference type="OrthoDB" id="9809920at2"/>
<dbReference type="UniPathway" id="UPA00053">
    <property type="reaction ID" value="UER00089"/>
</dbReference>
<dbReference type="Proteomes" id="UP000008818">
    <property type="component" value="Chromosome"/>
</dbReference>
<dbReference type="GO" id="GO:0005737">
    <property type="term" value="C:cytoplasm"/>
    <property type="evidence" value="ECO:0007669"/>
    <property type="project" value="UniProtKB-SubCell"/>
</dbReference>
<dbReference type="GO" id="GO:0003866">
    <property type="term" value="F:3-phosphoshikimate 1-carboxyvinyltransferase activity"/>
    <property type="evidence" value="ECO:0007669"/>
    <property type="project" value="UniProtKB-UniRule"/>
</dbReference>
<dbReference type="GO" id="GO:0008652">
    <property type="term" value="P:amino acid biosynthetic process"/>
    <property type="evidence" value="ECO:0007669"/>
    <property type="project" value="UniProtKB-KW"/>
</dbReference>
<dbReference type="GO" id="GO:0009073">
    <property type="term" value="P:aromatic amino acid family biosynthetic process"/>
    <property type="evidence" value="ECO:0007669"/>
    <property type="project" value="UniProtKB-KW"/>
</dbReference>
<dbReference type="GO" id="GO:0009423">
    <property type="term" value="P:chorismate biosynthetic process"/>
    <property type="evidence" value="ECO:0007669"/>
    <property type="project" value="UniProtKB-UniRule"/>
</dbReference>
<dbReference type="CDD" id="cd01556">
    <property type="entry name" value="EPSP_synthase"/>
    <property type="match status" value="1"/>
</dbReference>
<dbReference type="FunFam" id="3.65.10.10:FF:000005">
    <property type="entry name" value="3-phosphoshikimate 1-carboxyvinyltransferase"/>
    <property type="match status" value="1"/>
</dbReference>
<dbReference type="FunFam" id="3.65.10.10:FF:000006">
    <property type="entry name" value="3-phosphoshikimate 1-carboxyvinyltransferase"/>
    <property type="match status" value="1"/>
</dbReference>
<dbReference type="Gene3D" id="3.65.10.10">
    <property type="entry name" value="Enolpyruvate transferase domain"/>
    <property type="match status" value="2"/>
</dbReference>
<dbReference type="HAMAP" id="MF_00210">
    <property type="entry name" value="EPSP_synth"/>
    <property type="match status" value="1"/>
</dbReference>
<dbReference type="InterPro" id="IPR001986">
    <property type="entry name" value="Enolpyruvate_Tfrase_dom"/>
</dbReference>
<dbReference type="InterPro" id="IPR036968">
    <property type="entry name" value="Enolpyruvate_Tfrase_sf"/>
</dbReference>
<dbReference type="InterPro" id="IPR006264">
    <property type="entry name" value="EPSP_synthase"/>
</dbReference>
<dbReference type="InterPro" id="IPR023193">
    <property type="entry name" value="EPSP_synthase_CS"/>
</dbReference>
<dbReference type="InterPro" id="IPR013792">
    <property type="entry name" value="RNA3'P_cycl/enolpyr_Trfase_a/b"/>
</dbReference>
<dbReference type="NCBIfam" id="TIGR01356">
    <property type="entry name" value="aroA"/>
    <property type="match status" value="1"/>
</dbReference>
<dbReference type="PANTHER" id="PTHR21090">
    <property type="entry name" value="AROM/DEHYDROQUINATE SYNTHASE"/>
    <property type="match status" value="1"/>
</dbReference>
<dbReference type="PANTHER" id="PTHR21090:SF5">
    <property type="entry name" value="PENTAFUNCTIONAL AROM POLYPEPTIDE"/>
    <property type="match status" value="1"/>
</dbReference>
<dbReference type="Pfam" id="PF00275">
    <property type="entry name" value="EPSP_synthase"/>
    <property type="match status" value="1"/>
</dbReference>
<dbReference type="PIRSF" id="PIRSF000505">
    <property type="entry name" value="EPSPS"/>
    <property type="match status" value="1"/>
</dbReference>
<dbReference type="SUPFAM" id="SSF55205">
    <property type="entry name" value="EPT/RTPC-like"/>
    <property type="match status" value="1"/>
</dbReference>
<dbReference type="PROSITE" id="PS00104">
    <property type="entry name" value="EPSP_SYNTHASE_1"/>
    <property type="match status" value="1"/>
</dbReference>
<dbReference type="PROSITE" id="PS00885">
    <property type="entry name" value="EPSP_SYNTHASE_2"/>
    <property type="match status" value="1"/>
</dbReference>
<reference key="1">
    <citation type="journal article" date="2007" name="ISME J.">
        <title>Population level functional diversity in a microbial community revealed by comparative genomic and metagenomic analyses.</title>
        <authorList>
            <person name="Bhaya D."/>
            <person name="Grossman A.R."/>
            <person name="Steunou A.-S."/>
            <person name="Khuri N."/>
            <person name="Cohan F.M."/>
            <person name="Hamamura N."/>
            <person name="Melendrez M.C."/>
            <person name="Bateson M.M."/>
            <person name="Ward D.M."/>
            <person name="Heidelberg J.F."/>
        </authorList>
    </citation>
    <scope>NUCLEOTIDE SEQUENCE [LARGE SCALE GENOMIC DNA]</scope>
    <source>
        <strain>JA-3-3Ab</strain>
    </source>
</reference>
<gene>
    <name evidence="1" type="primary">aroA</name>
    <name type="ordered locus">CYA_2296</name>
</gene>
<proteinExistence type="inferred from homology"/>
<sequence length="444" mass="46397">MLTTASSADILTLSPARGLRGQVSIPGDKSISHRALMLGSLAEGETVIHGLSLGEDPRSTAACFRALGADIPELNSECVRIQGVGLDRLQEPAEVLDAGNSGTTLRLMLGILAGQAGRFFAVTGDRSLRSRPMGRVVEPLRQMGANIWGRAGGNLAPLAVQGGSLKGIHYHSPVASAQVKSCLLLAGLLAEGTTQVTEPALSRDHSERMLRAFGAEISVDVAAKTVAVVGGSRLVGQTVQVPGDISSAAFWLVAASIVPESELLLQDVGLNPTRTGVLQVLQEMGADIQVEKRREVAGEPLGDLRVRSARLRGCSIAGDLIPTLIDEIPVLAVAAAFAEGTTVIRDAAELRVKESDRLAAIAQELSRMGAQVTEYPDGLEIKGGIPLQGAEVDSHADHRIAMSLMVAALAAQGSTTLRGADCARISYPDFIPTLQRLINPSSAS</sequence>